<keyword id="KW-0067">ATP-binding</keyword>
<keyword id="KW-0092">Biotin</keyword>
<keyword id="KW-0963">Cytoplasm</keyword>
<keyword id="KW-0312">Gluconeogenesis</keyword>
<keyword id="KW-0436">Ligase</keyword>
<keyword id="KW-0479">Metal-binding</keyword>
<keyword id="KW-0511">Multifunctional enzyme</keyword>
<keyword id="KW-0547">Nucleotide-binding</keyword>
<keyword id="KW-0862">Zinc</keyword>
<proteinExistence type="inferred from homology"/>
<organism>
    <name type="scientific">Komagataella pastoris</name>
    <name type="common">Yeast</name>
    <name type="synonym">Pichia pastoris</name>
    <dbReference type="NCBI Taxonomy" id="4922"/>
    <lineage>
        <taxon>Eukaryota</taxon>
        <taxon>Fungi</taxon>
        <taxon>Dikarya</taxon>
        <taxon>Ascomycota</taxon>
        <taxon>Saccharomycotina</taxon>
        <taxon>Pichiomycetes</taxon>
        <taxon>Pichiales</taxon>
        <taxon>Pichiaceae</taxon>
        <taxon>Komagataella</taxon>
    </lineage>
</organism>
<accession>P78992</accession>
<sequence length="1189" mass="131400">MAEEDYLPVYQLRRDSSLLGTMNKILVANRGEIPIRIFRTAHELSMNTVAIYSHEDRLSMHRLKADEAYVIGERGQYSPVQAYLAIDEIIKIAVKHNVNMIHPGYGFCSENSEFARKVEENGILWVGPSDTVIDAVGDKVSARNLAYAANVPTVPGTPGPIEDVAQATAFVEEYGYPVIIKAAFGGGGRGMRVVREGDDIEDAFLRASSEAKTAFGNGTVFIERFLDKPKHIEVQLLADNYGNVIHLFERDCSVQRRHQKVARNCSAKTLPVEVRNAILNDAVKLAKTANYRNAGTAEFLVDSQNRHYFIEINPRIQVEHTITEEITGVDIVAAQIQIAAGASLEQLGLLQEKITTRGFAIQCRITTEDPTKNFQPDTGKIEVYRSSGGNGVRLDGGNGFAGAVISPHYDSMLVKCSTSGSNYEIRRRKMIRALVEFRIRGVKTNIPFLLALLTHPVFMTSECWTTFIDDTPELFKILTSQNRAQKLLAYLGDLAVNGSSIKGQIGLPKLHKEADIPSITDINGDVIDVSIPPPDGWRQFLLEKGPEQFAQQVRAFPGLMIMDTTWRDAHQSLLATRVRTHDLLNIAPATSYALHHAFALECWGGATFDVSMRFLHEDPWQRLRKLRKAVPNIPFSMLLRGGNGVAYYSLPDNAIDHFLKQAKDTGVDVFRVFDALNDIEQLKVGVDAVKKAGGVVEATMCYSGDMLKPGKKYNLEYYINLATEIVEMGTHILAVKDMAGTLKPTAAKQLISALRRKFPSLPIHVHTHDSAGTGVASMVACARAGADVVTVRVNSMSGMTSQPSMSAFIASLDGEIETGIPEANAREIDAYWAEMRLLYSCFEADLKGPDPEVYQHEIPGGQLTNLLFQAQQVGLGEKWVETKKAYEAANRLLGDIVKVTPTSKVVGDLAQFMVSNKLSSEDVERLASELDFPDSVLDFFEGLMGTPYGGFPEPLRTNVISGKRRKLTSRPGLTLEPYNIPAIREDLEARFSKVTENDVASYNMYPKVYEAYKKQQELYGDLSVLPTRNFLSPPKIDEERHVTIVTIETRKTLIIKCMAEGELSQSSGTREVYFELNGEMRKVTVEDKNGAVETITRPKADAHNPNEIGAPMAGVVVEVRVHENGEVKKGDPIAVLSAMKMEMVISSPVAGRIGQIAVKENDSVDASDLIPKSSRLSKLLMFIILIILY</sequence>
<gene>
    <name type="primary">PYC1</name>
</gene>
<name>PYC_PICPA</name>
<reference key="1">
    <citation type="journal article" date="1998" name="Yeast">
        <title>Isolation of the Pichia pastoris PYC1 gene encoding pyruvate carboxylase and identification of a suppressor of the pyc phenotype.</title>
        <authorList>
            <person name="Menendez J."/>
            <person name="Delgado J."/>
            <person name="Gancedo C."/>
        </authorList>
    </citation>
    <scope>NUCLEOTIDE SEQUENCE [GENOMIC DNA]</scope>
</reference>
<protein>
    <recommendedName>
        <fullName>Pyruvate carboxylase</fullName>
        <ecNumber>6.4.1.1</ecNumber>
    </recommendedName>
    <alternativeName>
        <fullName>Pyruvic carboxylase</fullName>
        <shortName>PCB</shortName>
    </alternativeName>
</protein>
<feature type="chain" id="PRO_0000146822" description="Pyruvate carboxylase">
    <location>
        <begin position="1"/>
        <end position="1189"/>
    </location>
</feature>
<feature type="domain" description="Biotin carboxylation">
    <location>
        <begin position="21"/>
        <end position="473"/>
    </location>
</feature>
<feature type="domain" description="ATP-grasp" evidence="2">
    <location>
        <begin position="143"/>
        <end position="340"/>
    </location>
</feature>
<feature type="domain" description="Pyruvate carboxyltransferase" evidence="4">
    <location>
        <begin position="559"/>
        <end position="826"/>
    </location>
</feature>
<feature type="domain" description="Biotinyl-binding" evidence="3">
    <location>
        <begin position="1099"/>
        <end position="1174"/>
    </location>
</feature>
<feature type="active site" evidence="1">
    <location>
        <position position="315"/>
    </location>
</feature>
<feature type="binding site" evidence="1">
    <location>
        <position position="139"/>
    </location>
    <ligand>
        <name>ATP</name>
        <dbReference type="ChEBI" id="CHEBI:30616"/>
    </ligand>
</feature>
<feature type="binding site" evidence="1">
    <location>
        <position position="223"/>
    </location>
    <ligand>
        <name>ATP</name>
        <dbReference type="ChEBI" id="CHEBI:30616"/>
    </ligand>
</feature>
<feature type="binding site" evidence="1">
    <location>
        <position position="258"/>
    </location>
    <ligand>
        <name>ATP</name>
        <dbReference type="ChEBI" id="CHEBI:30616"/>
    </ligand>
</feature>
<feature type="binding site" evidence="1">
    <location>
        <begin position="567"/>
        <end position="571"/>
    </location>
    <ligand>
        <name>substrate</name>
    </ligand>
</feature>
<feature type="binding site" evidence="1">
    <location>
        <position position="568"/>
    </location>
    <ligand>
        <name>a divalent metal cation</name>
        <dbReference type="ChEBI" id="CHEBI:60240"/>
    </ligand>
</feature>
<feature type="binding site" evidence="1">
    <location>
        <position position="640"/>
    </location>
    <ligand>
        <name>substrate</name>
    </ligand>
</feature>
<feature type="binding site" description="via carbamate group" evidence="1">
    <location>
        <position position="736"/>
    </location>
    <ligand>
        <name>a divalent metal cation</name>
        <dbReference type="ChEBI" id="CHEBI:60240"/>
    </ligand>
</feature>
<feature type="binding site" evidence="1">
    <location>
        <position position="766"/>
    </location>
    <ligand>
        <name>a divalent metal cation</name>
        <dbReference type="ChEBI" id="CHEBI:60240"/>
    </ligand>
</feature>
<feature type="binding site" evidence="1">
    <location>
        <position position="768"/>
    </location>
    <ligand>
        <name>a divalent metal cation</name>
        <dbReference type="ChEBI" id="CHEBI:60240"/>
    </ligand>
</feature>
<feature type="binding site" evidence="1">
    <location>
        <position position="900"/>
    </location>
    <ligand>
        <name>substrate</name>
    </ligand>
</feature>
<feature type="modified residue" description="N6-carboxylysine" evidence="1">
    <location>
        <position position="736"/>
    </location>
</feature>
<feature type="modified residue" description="N6-biotinyllysine" evidence="1 3">
    <location>
        <position position="1140"/>
    </location>
</feature>
<evidence type="ECO:0000250" key="1"/>
<evidence type="ECO:0000255" key="2">
    <source>
        <dbReference type="PROSITE-ProRule" id="PRU00409"/>
    </source>
</evidence>
<evidence type="ECO:0000255" key="3">
    <source>
        <dbReference type="PROSITE-ProRule" id="PRU01066"/>
    </source>
</evidence>
<evidence type="ECO:0000255" key="4">
    <source>
        <dbReference type="PROSITE-ProRule" id="PRU01151"/>
    </source>
</evidence>
<comment type="function">
    <text evidence="1">Pyruvate carboxylase catalyzes a 2-step reaction, involving the ATP-dependent carboxylation of the covalently attached biotin in the first step and the transfer of the carboxyl group to pyruvate in the second.</text>
</comment>
<comment type="catalytic activity">
    <reaction>
        <text>hydrogencarbonate + pyruvate + ATP = oxaloacetate + ADP + phosphate + H(+)</text>
        <dbReference type="Rhea" id="RHEA:20844"/>
        <dbReference type="ChEBI" id="CHEBI:15361"/>
        <dbReference type="ChEBI" id="CHEBI:15378"/>
        <dbReference type="ChEBI" id="CHEBI:16452"/>
        <dbReference type="ChEBI" id="CHEBI:17544"/>
        <dbReference type="ChEBI" id="CHEBI:30616"/>
        <dbReference type="ChEBI" id="CHEBI:43474"/>
        <dbReference type="ChEBI" id="CHEBI:456216"/>
        <dbReference type="EC" id="6.4.1.1"/>
    </reaction>
</comment>
<comment type="cofactor">
    <cofactor>
        <name>biotin</name>
        <dbReference type="ChEBI" id="CHEBI:57586"/>
    </cofactor>
</comment>
<comment type="cofactor">
    <cofactor>
        <name>Zn(2+)</name>
        <dbReference type="ChEBI" id="CHEBI:29105"/>
    </cofactor>
</comment>
<comment type="pathway">
    <text>Carbohydrate biosynthesis; gluconeogenesis.</text>
</comment>
<comment type="subcellular location">
    <subcellularLocation>
        <location>Cytoplasm</location>
    </subcellularLocation>
</comment>
<dbReference type="EC" id="6.4.1.1"/>
<dbReference type="EMBL" id="Y11106">
    <property type="protein sequence ID" value="CAA71993.1"/>
    <property type="molecule type" value="Genomic_DNA"/>
</dbReference>
<dbReference type="SMR" id="P78992"/>
<dbReference type="UniPathway" id="UPA00138"/>
<dbReference type="GO" id="GO:0005737">
    <property type="term" value="C:cytoplasm"/>
    <property type="evidence" value="ECO:0007669"/>
    <property type="project" value="UniProtKB-SubCell"/>
</dbReference>
<dbReference type="GO" id="GO:0005524">
    <property type="term" value="F:ATP binding"/>
    <property type="evidence" value="ECO:0007669"/>
    <property type="project" value="UniProtKB-KW"/>
</dbReference>
<dbReference type="GO" id="GO:0046872">
    <property type="term" value="F:metal ion binding"/>
    <property type="evidence" value="ECO:0007669"/>
    <property type="project" value="UniProtKB-KW"/>
</dbReference>
<dbReference type="GO" id="GO:0004736">
    <property type="term" value="F:pyruvate carboxylase activity"/>
    <property type="evidence" value="ECO:0007669"/>
    <property type="project" value="UniProtKB-EC"/>
</dbReference>
<dbReference type="GO" id="GO:0006094">
    <property type="term" value="P:gluconeogenesis"/>
    <property type="evidence" value="ECO:0007669"/>
    <property type="project" value="UniProtKB-UniPathway"/>
</dbReference>
<dbReference type="CDD" id="cd06850">
    <property type="entry name" value="biotinyl_domain"/>
    <property type="match status" value="1"/>
</dbReference>
<dbReference type="CDD" id="cd07937">
    <property type="entry name" value="DRE_TIM_PC_TC_5S"/>
    <property type="match status" value="1"/>
</dbReference>
<dbReference type="FunFam" id="2.40.50.100:FF:000003">
    <property type="entry name" value="Acetyl-CoA carboxylase biotin carboxyl carrier protein"/>
    <property type="match status" value="1"/>
</dbReference>
<dbReference type="FunFam" id="3.30.1490.20:FF:000018">
    <property type="entry name" value="Biotin carboxylase"/>
    <property type="match status" value="1"/>
</dbReference>
<dbReference type="FunFam" id="3.40.50.20:FF:000010">
    <property type="entry name" value="Propionyl-CoA carboxylase subunit alpha"/>
    <property type="match status" value="1"/>
</dbReference>
<dbReference type="FunFam" id="3.20.20.70:FF:000033">
    <property type="entry name" value="Pyruvate carboxylase"/>
    <property type="match status" value="1"/>
</dbReference>
<dbReference type="FunFam" id="3.30.470.20:FF:000012">
    <property type="entry name" value="Pyruvate carboxylase"/>
    <property type="match status" value="1"/>
</dbReference>
<dbReference type="Gene3D" id="2.40.50.100">
    <property type="match status" value="1"/>
</dbReference>
<dbReference type="Gene3D" id="3.20.20.70">
    <property type="entry name" value="Aldolase class I"/>
    <property type="match status" value="1"/>
</dbReference>
<dbReference type="Gene3D" id="3.30.470.20">
    <property type="entry name" value="ATP-grasp fold, B domain"/>
    <property type="match status" value="1"/>
</dbReference>
<dbReference type="Gene3D" id="3.10.600.10">
    <property type="entry name" value="pyruvate carboxylase f1077a mutant domain"/>
    <property type="match status" value="1"/>
</dbReference>
<dbReference type="InterPro" id="IPR013785">
    <property type="entry name" value="Aldolase_TIM"/>
</dbReference>
<dbReference type="InterPro" id="IPR011761">
    <property type="entry name" value="ATP-grasp"/>
</dbReference>
<dbReference type="InterPro" id="IPR005481">
    <property type="entry name" value="BC-like_N"/>
</dbReference>
<dbReference type="InterPro" id="IPR001882">
    <property type="entry name" value="Biotin_BS"/>
</dbReference>
<dbReference type="InterPro" id="IPR011764">
    <property type="entry name" value="Biotin_carboxylation_dom"/>
</dbReference>
<dbReference type="InterPro" id="IPR005482">
    <property type="entry name" value="Biotin_COase_C"/>
</dbReference>
<dbReference type="InterPro" id="IPR000089">
    <property type="entry name" value="Biotin_lipoyl"/>
</dbReference>
<dbReference type="InterPro" id="IPR003379">
    <property type="entry name" value="Carboxylase_cons_dom"/>
</dbReference>
<dbReference type="InterPro" id="IPR005479">
    <property type="entry name" value="CbamoylP_synth_lsu-like_ATP-bd"/>
</dbReference>
<dbReference type="InterPro" id="IPR055268">
    <property type="entry name" value="PCB-like"/>
</dbReference>
<dbReference type="InterPro" id="IPR016185">
    <property type="entry name" value="PreATP-grasp_dom_sf"/>
</dbReference>
<dbReference type="InterPro" id="IPR000891">
    <property type="entry name" value="PYR_CT"/>
</dbReference>
<dbReference type="InterPro" id="IPR005930">
    <property type="entry name" value="Pyruv_COase"/>
</dbReference>
<dbReference type="InterPro" id="IPR011054">
    <property type="entry name" value="Rudment_hybrid_motif"/>
</dbReference>
<dbReference type="InterPro" id="IPR011053">
    <property type="entry name" value="Single_hybrid_motif"/>
</dbReference>
<dbReference type="NCBIfam" id="NF006761">
    <property type="entry name" value="PRK09282.1"/>
    <property type="match status" value="1"/>
</dbReference>
<dbReference type="NCBIfam" id="NF009554">
    <property type="entry name" value="PRK12999.1"/>
    <property type="match status" value="1"/>
</dbReference>
<dbReference type="NCBIfam" id="TIGR01235">
    <property type="entry name" value="pyruv_carbox"/>
    <property type="match status" value="1"/>
</dbReference>
<dbReference type="PANTHER" id="PTHR43778">
    <property type="entry name" value="PYRUVATE CARBOXYLASE"/>
    <property type="match status" value="1"/>
</dbReference>
<dbReference type="PANTHER" id="PTHR43778:SF2">
    <property type="entry name" value="PYRUVATE CARBOXYLASE, MITOCHONDRIAL"/>
    <property type="match status" value="1"/>
</dbReference>
<dbReference type="Pfam" id="PF02785">
    <property type="entry name" value="Biotin_carb_C"/>
    <property type="match status" value="1"/>
</dbReference>
<dbReference type="Pfam" id="PF00289">
    <property type="entry name" value="Biotin_carb_N"/>
    <property type="match status" value="1"/>
</dbReference>
<dbReference type="Pfam" id="PF00364">
    <property type="entry name" value="Biotin_lipoyl"/>
    <property type="match status" value="1"/>
</dbReference>
<dbReference type="Pfam" id="PF02786">
    <property type="entry name" value="CPSase_L_D2"/>
    <property type="match status" value="1"/>
</dbReference>
<dbReference type="Pfam" id="PF00682">
    <property type="entry name" value="HMGL-like"/>
    <property type="match status" value="1"/>
</dbReference>
<dbReference type="Pfam" id="PF02436">
    <property type="entry name" value="PYC_OADA"/>
    <property type="match status" value="1"/>
</dbReference>
<dbReference type="PIRSF" id="PIRSF001594">
    <property type="entry name" value="Pyruv_carbox"/>
    <property type="match status" value="1"/>
</dbReference>
<dbReference type="SMART" id="SM00878">
    <property type="entry name" value="Biotin_carb_C"/>
    <property type="match status" value="1"/>
</dbReference>
<dbReference type="SUPFAM" id="SSF51569">
    <property type="entry name" value="Aldolase"/>
    <property type="match status" value="1"/>
</dbReference>
<dbReference type="SUPFAM" id="SSF56059">
    <property type="entry name" value="Glutathione synthetase ATP-binding domain-like"/>
    <property type="match status" value="1"/>
</dbReference>
<dbReference type="SUPFAM" id="SSF89000">
    <property type="entry name" value="post-HMGL domain-like"/>
    <property type="match status" value="1"/>
</dbReference>
<dbReference type="SUPFAM" id="SSF52440">
    <property type="entry name" value="PreATP-grasp domain"/>
    <property type="match status" value="1"/>
</dbReference>
<dbReference type="SUPFAM" id="SSF51246">
    <property type="entry name" value="Rudiment single hybrid motif"/>
    <property type="match status" value="1"/>
</dbReference>
<dbReference type="SUPFAM" id="SSF51230">
    <property type="entry name" value="Single hybrid motif"/>
    <property type="match status" value="1"/>
</dbReference>
<dbReference type="PROSITE" id="PS50975">
    <property type="entry name" value="ATP_GRASP"/>
    <property type="match status" value="1"/>
</dbReference>
<dbReference type="PROSITE" id="PS50979">
    <property type="entry name" value="BC"/>
    <property type="match status" value="1"/>
</dbReference>
<dbReference type="PROSITE" id="PS00188">
    <property type="entry name" value="BIOTIN"/>
    <property type="match status" value="1"/>
</dbReference>
<dbReference type="PROSITE" id="PS50968">
    <property type="entry name" value="BIOTINYL_LIPOYL"/>
    <property type="match status" value="1"/>
</dbReference>
<dbReference type="PROSITE" id="PS00866">
    <property type="entry name" value="CPSASE_1"/>
    <property type="match status" value="1"/>
</dbReference>
<dbReference type="PROSITE" id="PS00867">
    <property type="entry name" value="CPSASE_2"/>
    <property type="match status" value="1"/>
</dbReference>
<dbReference type="PROSITE" id="PS50991">
    <property type="entry name" value="PYR_CT"/>
    <property type="match status" value="1"/>
</dbReference>